<keyword id="KW-1003">Cell membrane</keyword>
<keyword id="KW-0210">Decarboxylase</keyword>
<keyword id="KW-0444">Lipid biosynthesis</keyword>
<keyword id="KW-0443">Lipid metabolism</keyword>
<keyword id="KW-0456">Lyase</keyword>
<keyword id="KW-0472">Membrane</keyword>
<keyword id="KW-0594">Phospholipid biosynthesis</keyword>
<keyword id="KW-1208">Phospholipid metabolism</keyword>
<keyword id="KW-0670">Pyruvate</keyword>
<keyword id="KW-0865">Zymogen</keyword>
<reference key="1">
    <citation type="journal article" date="2008" name="J. Bacteriol.">
        <title>Complete genome sequence of Neisseria gonorrhoeae NCCP11945.</title>
        <authorList>
            <person name="Chung G.T."/>
            <person name="Yoo J.S."/>
            <person name="Oh H.B."/>
            <person name="Lee Y.S."/>
            <person name="Cha S.H."/>
            <person name="Kim S.J."/>
            <person name="Yoo C.K."/>
        </authorList>
    </citation>
    <scope>NUCLEOTIDE SEQUENCE [LARGE SCALE GENOMIC DNA]</scope>
    <source>
        <strain>NCCP11945</strain>
    </source>
</reference>
<dbReference type="EC" id="4.1.1.65" evidence="1"/>
<dbReference type="EMBL" id="CP001050">
    <property type="protein sequence ID" value="ACF29004.1"/>
    <property type="molecule type" value="Genomic_DNA"/>
</dbReference>
<dbReference type="RefSeq" id="WP_003690682.1">
    <property type="nucleotide sequence ID" value="NC_011035.1"/>
</dbReference>
<dbReference type="KEGG" id="ngk:NGK_0310"/>
<dbReference type="HOGENOM" id="CLU_072492_0_0_4"/>
<dbReference type="UniPathway" id="UPA00558">
    <property type="reaction ID" value="UER00616"/>
</dbReference>
<dbReference type="Proteomes" id="UP000002564">
    <property type="component" value="Chromosome"/>
</dbReference>
<dbReference type="GO" id="GO:0005886">
    <property type="term" value="C:plasma membrane"/>
    <property type="evidence" value="ECO:0007669"/>
    <property type="project" value="UniProtKB-SubCell"/>
</dbReference>
<dbReference type="GO" id="GO:0004609">
    <property type="term" value="F:phosphatidylserine decarboxylase activity"/>
    <property type="evidence" value="ECO:0007669"/>
    <property type="project" value="UniProtKB-UniRule"/>
</dbReference>
<dbReference type="GO" id="GO:0006646">
    <property type="term" value="P:phosphatidylethanolamine biosynthetic process"/>
    <property type="evidence" value="ECO:0007669"/>
    <property type="project" value="UniProtKB-UniRule"/>
</dbReference>
<dbReference type="HAMAP" id="MF_00664">
    <property type="entry name" value="PS_decarb_PSD_A"/>
    <property type="match status" value="1"/>
</dbReference>
<dbReference type="InterPro" id="IPR003817">
    <property type="entry name" value="PS_Dcarbxylase"/>
</dbReference>
<dbReference type="InterPro" id="IPR033175">
    <property type="entry name" value="PSD-A"/>
</dbReference>
<dbReference type="NCBIfam" id="TIGR00164">
    <property type="entry name" value="AS_decarb"/>
    <property type="match status" value="1"/>
</dbReference>
<dbReference type="NCBIfam" id="NF003678">
    <property type="entry name" value="PRK05305.1-2"/>
    <property type="match status" value="1"/>
</dbReference>
<dbReference type="NCBIfam" id="NF003680">
    <property type="entry name" value="PRK05305.1-5"/>
    <property type="match status" value="1"/>
</dbReference>
<dbReference type="PANTHER" id="PTHR35809">
    <property type="entry name" value="ARCHAETIDYLSERINE DECARBOXYLASE PROENZYME-RELATED"/>
    <property type="match status" value="1"/>
</dbReference>
<dbReference type="PANTHER" id="PTHR35809:SF1">
    <property type="entry name" value="ARCHAETIDYLSERINE DECARBOXYLASE PROENZYME-RELATED"/>
    <property type="match status" value="1"/>
</dbReference>
<dbReference type="Pfam" id="PF02666">
    <property type="entry name" value="PS_Dcarbxylase"/>
    <property type="match status" value="1"/>
</dbReference>
<gene>
    <name evidence="1" type="primary">psd</name>
    <name type="ordered locus">NGK_0310</name>
</gene>
<sequence length="259" mass="28262">MNRLYPHPIIAREGWPIIGGGLALSLLVSMCCGWWSLPFWVFTVFALQFFRDPAREIPQNPEAVLSPVDGRIVVVERARDPYRDVDALKISIFMNVFNVHSQKSPADCTVTKVVYNKGKFVNADLDKASTENERNAVLATTASGREITFVQVAGLVARRILCYTQAGAKLSRGERYGFIRFGSRVDVYLPVDAQAQVAIGDKVTGVKTVLARLPLTDSQADPVSQAASVETAANPSAEQQQIEAAAAKIQAAVQDVLKD</sequence>
<proteinExistence type="inferred from homology"/>
<feature type="chain" id="PRO_1000131474" description="Phosphatidylserine decarboxylase beta chain" evidence="1">
    <location>
        <begin position="1"/>
        <end position="182"/>
    </location>
</feature>
<feature type="chain" id="PRO_1000131475" description="Phosphatidylserine decarboxylase alpha chain" evidence="1">
    <location>
        <begin position="183"/>
        <end position="259"/>
    </location>
</feature>
<feature type="active site" description="Schiff-base intermediate with substrate; via pyruvic acid" evidence="1">
    <location>
        <position position="183"/>
    </location>
</feature>
<feature type="site" description="Cleavage (non-hydrolytic); by autocatalysis" evidence="1">
    <location>
        <begin position="182"/>
        <end position="183"/>
    </location>
</feature>
<feature type="modified residue" description="Pyruvic acid (Ser); by autocatalysis" evidence="1">
    <location>
        <position position="183"/>
    </location>
</feature>
<protein>
    <recommendedName>
        <fullName evidence="1">Phosphatidylserine decarboxylase proenzyme</fullName>
        <ecNumber evidence="1">4.1.1.65</ecNumber>
    </recommendedName>
    <component>
        <recommendedName>
            <fullName evidence="1">Phosphatidylserine decarboxylase alpha chain</fullName>
        </recommendedName>
    </component>
    <component>
        <recommendedName>
            <fullName evidence="1">Phosphatidylserine decarboxylase beta chain</fullName>
        </recommendedName>
    </component>
</protein>
<organism>
    <name type="scientific">Neisseria gonorrhoeae (strain NCCP11945)</name>
    <dbReference type="NCBI Taxonomy" id="521006"/>
    <lineage>
        <taxon>Bacteria</taxon>
        <taxon>Pseudomonadati</taxon>
        <taxon>Pseudomonadota</taxon>
        <taxon>Betaproteobacteria</taxon>
        <taxon>Neisseriales</taxon>
        <taxon>Neisseriaceae</taxon>
        <taxon>Neisseria</taxon>
    </lineage>
</organism>
<evidence type="ECO:0000255" key="1">
    <source>
        <dbReference type="HAMAP-Rule" id="MF_00664"/>
    </source>
</evidence>
<accession>B4RJK0</accession>
<name>PSD_NEIG2</name>
<comment type="function">
    <text evidence="1">Catalyzes the formation of phosphatidylethanolamine (PtdEtn) from phosphatidylserine (PtdSer).</text>
</comment>
<comment type="catalytic activity">
    <reaction evidence="1">
        <text>a 1,2-diacyl-sn-glycero-3-phospho-L-serine + H(+) = a 1,2-diacyl-sn-glycero-3-phosphoethanolamine + CO2</text>
        <dbReference type="Rhea" id="RHEA:20828"/>
        <dbReference type="ChEBI" id="CHEBI:15378"/>
        <dbReference type="ChEBI" id="CHEBI:16526"/>
        <dbReference type="ChEBI" id="CHEBI:57262"/>
        <dbReference type="ChEBI" id="CHEBI:64612"/>
        <dbReference type="EC" id="4.1.1.65"/>
    </reaction>
</comment>
<comment type="cofactor">
    <cofactor evidence="1">
        <name>pyruvate</name>
        <dbReference type="ChEBI" id="CHEBI:15361"/>
    </cofactor>
    <text evidence="1">Binds 1 pyruvoyl group covalently per subunit.</text>
</comment>
<comment type="pathway">
    <text evidence="1">Phospholipid metabolism; phosphatidylethanolamine biosynthesis; phosphatidylethanolamine from CDP-diacylglycerol: step 2/2.</text>
</comment>
<comment type="subunit">
    <text evidence="1">Heterodimer of a large membrane-associated beta subunit and a small pyruvoyl-containing alpha subunit.</text>
</comment>
<comment type="subcellular location">
    <subcellularLocation>
        <location evidence="1">Cell membrane</location>
        <topology evidence="1">Peripheral membrane protein</topology>
    </subcellularLocation>
</comment>
<comment type="PTM">
    <text evidence="1">Is synthesized initially as an inactive proenzyme. Formation of the active enzyme involves a self-maturation process in which the active site pyruvoyl group is generated from an internal serine residue via an autocatalytic post-translational modification. Two non-identical subunits are generated from the proenzyme in this reaction, and the pyruvate is formed at the N-terminus of the alpha chain, which is derived from the carboxyl end of the proenzyme. The post-translation cleavage follows an unusual pathway, termed non-hydrolytic serinolysis, in which the side chain hydroxyl group of the serine supplies its oxygen atom to form the C-terminus of the beta chain, while the remainder of the serine residue undergoes an oxidative deamination to produce ammonia and the pyruvoyl prosthetic group on the alpha chain.</text>
</comment>
<comment type="similarity">
    <text evidence="1">Belongs to the phosphatidylserine decarboxylase family. PSD-A subfamily.</text>
</comment>